<comment type="function">
    <text evidence="1">Required for the formation of a threonylcarbamoyl group on adenosine at position 37 (t(6)A37) in tRNAs that read codons beginning with adenine. Is involved in the transfer of the threonylcarbamoyl moiety of threonylcarbamoyl-AMP (TC-AMP) to the N6 group of A37, together with TsaE and TsaB. TsaD likely plays a direct catalytic role in this reaction.</text>
</comment>
<comment type="catalytic activity">
    <reaction evidence="1">
        <text>L-threonylcarbamoyladenylate + adenosine(37) in tRNA = N(6)-L-threonylcarbamoyladenosine(37) in tRNA + AMP + H(+)</text>
        <dbReference type="Rhea" id="RHEA:37059"/>
        <dbReference type="Rhea" id="RHEA-COMP:10162"/>
        <dbReference type="Rhea" id="RHEA-COMP:10163"/>
        <dbReference type="ChEBI" id="CHEBI:15378"/>
        <dbReference type="ChEBI" id="CHEBI:73682"/>
        <dbReference type="ChEBI" id="CHEBI:74411"/>
        <dbReference type="ChEBI" id="CHEBI:74418"/>
        <dbReference type="ChEBI" id="CHEBI:456215"/>
        <dbReference type="EC" id="2.3.1.234"/>
    </reaction>
</comment>
<comment type="cofactor">
    <cofactor evidence="1">
        <name>Fe(2+)</name>
        <dbReference type="ChEBI" id="CHEBI:29033"/>
    </cofactor>
    <text evidence="1">Binds 1 Fe(2+) ion per subunit.</text>
</comment>
<comment type="subcellular location">
    <subcellularLocation>
        <location evidence="1">Cytoplasm</location>
    </subcellularLocation>
</comment>
<comment type="similarity">
    <text evidence="1">Belongs to the KAE1 / TsaD family.</text>
</comment>
<proteinExistence type="inferred from homology"/>
<evidence type="ECO:0000255" key="1">
    <source>
        <dbReference type="HAMAP-Rule" id="MF_01445"/>
    </source>
</evidence>
<dbReference type="EC" id="2.3.1.234" evidence="1"/>
<dbReference type="EMBL" id="AP009510">
    <property type="protein sequence ID" value="BAG13788.1"/>
    <property type="molecule type" value="Genomic_DNA"/>
</dbReference>
<dbReference type="RefSeq" id="WP_015423315.1">
    <property type="nucleotide sequence ID" value="NC_020419.1"/>
</dbReference>
<dbReference type="SMR" id="B1GZV6"/>
<dbReference type="STRING" id="471821.TGRD_305"/>
<dbReference type="KEGG" id="eti:RSTT_279"/>
<dbReference type="KEGG" id="rsd:TGRD_305"/>
<dbReference type="PATRIC" id="fig|471821.5.peg.477"/>
<dbReference type="HOGENOM" id="CLU_023208_0_2_0"/>
<dbReference type="OrthoDB" id="9806197at2"/>
<dbReference type="Proteomes" id="UP000001691">
    <property type="component" value="Chromosome"/>
</dbReference>
<dbReference type="GO" id="GO:0005737">
    <property type="term" value="C:cytoplasm"/>
    <property type="evidence" value="ECO:0007669"/>
    <property type="project" value="UniProtKB-SubCell"/>
</dbReference>
<dbReference type="GO" id="GO:0005506">
    <property type="term" value="F:iron ion binding"/>
    <property type="evidence" value="ECO:0007669"/>
    <property type="project" value="UniProtKB-UniRule"/>
</dbReference>
<dbReference type="GO" id="GO:0061711">
    <property type="term" value="F:N(6)-L-threonylcarbamoyladenine synthase activity"/>
    <property type="evidence" value="ECO:0007669"/>
    <property type="project" value="UniProtKB-EC"/>
</dbReference>
<dbReference type="GO" id="GO:0002949">
    <property type="term" value="P:tRNA threonylcarbamoyladenosine modification"/>
    <property type="evidence" value="ECO:0007669"/>
    <property type="project" value="UniProtKB-UniRule"/>
</dbReference>
<dbReference type="CDD" id="cd24133">
    <property type="entry name" value="ASKHA_NBD_TsaD_bac"/>
    <property type="match status" value="1"/>
</dbReference>
<dbReference type="FunFam" id="3.30.420.40:FF:000012">
    <property type="entry name" value="tRNA N6-adenosine threonylcarbamoyltransferase"/>
    <property type="match status" value="1"/>
</dbReference>
<dbReference type="FunFam" id="3.30.420.40:FF:000040">
    <property type="entry name" value="tRNA N6-adenosine threonylcarbamoyltransferase"/>
    <property type="match status" value="1"/>
</dbReference>
<dbReference type="Gene3D" id="3.30.420.40">
    <property type="match status" value="2"/>
</dbReference>
<dbReference type="HAMAP" id="MF_01445">
    <property type="entry name" value="TsaD"/>
    <property type="match status" value="1"/>
</dbReference>
<dbReference type="InterPro" id="IPR043129">
    <property type="entry name" value="ATPase_NBD"/>
</dbReference>
<dbReference type="InterPro" id="IPR000905">
    <property type="entry name" value="Gcp-like_dom"/>
</dbReference>
<dbReference type="InterPro" id="IPR017861">
    <property type="entry name" value="KAE1/TsaD"/>
</dbReference>
<dbReference type="InterPro" id="IPR017860">
    <property type="entry name" value="Peptidase_M22_CS"/>
</dbReference>
<dbReference type="InterPro" id="IPR022450">
    <property type="entry name" value="TsaD"/>
</dbReference>
<dbReference type="NCBIfam" id="TIGR00329">
    <property type="entry name" value="gcp_kae1"/>
    <property type="match status" value="1"/>
</dbReference>
<dbReference type="NCBIfam" id="TIGR03723">
    <property type="entry name" value="T6A_TsaD_YgjD"/>
    <property type="match status" value="1"/>
</dbReference>
<dbReference type="PANTHER" id="PTHR11735">
    <property type="entry name" value="TRNA N6-ADENOSINE THREONYLCARBAMOYLTRANSFERASE"/>
    <property type="match status" value="1"/>
</dbReference>
<dbReference type="PANTHER" id="PTHR11735:SF6">
    <property type="entry name" value="TRNA N6-ADENOSINE THREONYLCARBAMOYLTRANSFERASE, MITOCHONDRIAL"/>
    <property type="match status" value="1"/>
</dbReference>
<dbReference type="Pfam" id="PF00814">
    <property type="entry name" value="TsaD"/>
    <property type="match status" value="1"/>
</dbReference>
<dbReference type="PRINTS" id="PR00789">
    <property type="entry name" value="OSIALOPTASE"/>
</dbReference>
<dbReference type="SUPFAM" id="SSF53067">
    <property type="entry name" value="Actin-like ATPase domain"/>
    <property type="match status" value="2"/>
</dbReference>
<dbReference type="PROSITE" id="PS01016">
    <property type="entry name" value="GLYCOPROTEASE"/>
    <property type="match status" value="1"/>
</dbReference>
<protein>
    <recommendedName>
        <fullName evidence="1">tRNA N6-adenosine threonylcarbamoyltransferase</fullName>
        <ecNumber evidence="1">2.3.1.234</ecNumber>
    </recommendedName>
    <alternativeName>
        <fullName evidence="1">N6-L-threonylcarbamoyladenine synthase</fullName>
        <shortName evidence="1">t(6)A synthase</shortName>
    </alternativeName>
    <alternativeName>
        <fullName evidence="1">t(6)A37 threonylcarbamoyladenosine biosynthesis protein TsaD</fullName>
    </alternativeName>
    <alternativeName>
        <fullName evidence="1">tRNA threonylcarbamoyladenosine biosynthesis protein TsaD</fullName>
    </alternativeName>
</protein>
<keyword id="KW-0012">Acyltransferase</keyword>
<keyword id="KW-0963">Cytoplasm</keyword>
<keyword id="KW-0408">Iron</keyword>
<keyword id="KW-0479">Metal-binding</keyword>
<keyword id="KW-0808">Transferase</keyword>
<keyword id="KW-0819">tRNA processing</keyword>
<organism>
    <name type="scientific">Endomicrobium trichonymphae</name>
    <dbReference type="NCBI Taxonomy" id="1408204"/>
    <lineage>
        <taxon>Bacteria</taxon>
        <taxon>Pseudomonadati</taxon>
        <taxon>Elusimicrobiota</taxon>
        <taxon>Endomicrobiia</taxon>
        <taxon>Endomicrobiales</taxon>
        <taxon>Endomicrobiaceae</taxon>
        <taxon>Candidatus Endomicrobiellum</taxon>
    </lineage>
</organism>
<accession>B1GZV6</accession>
<sequence length="342" mass="37245">MNIFAIETSCDETSASVVLNGLKVKSVVIYSQIKIHAGFFGVVPELASRSHIENINLVIWRALSDAGINFTDFSQKIDALAFTSGPGLAGALLVGAIAAKSLACVYKKPLIPVNHLDGHLYSSLIENRSVKLPFLSLIISGGHTELVVVEDFGKYKVLGSTRDDAAGEAFDKAAKMLGLSYPGGPIIDKIAESGNPEAVRFTRPYLKGSWDFSFSGIKTALLNYLKTNPVRNEKQLNDICASFRQAVAETLCFKSFEAAKKFNLKRIVLGGGVSANSLIRKIFLETGQKNNTKVFIPSLIYSTDNAAMIGCAAYFKQKKCGLKYDNIQLKPNPSLPLENWRL</sequence>
<name>TSAD_ENDTX</name>
<reference key="1">
    <citation type="journal article" date="2008" name="Proc. Natl. Acad. Sci. U.S.A.">
        <title>Complete genome of the uncultured termite group 1 bacteria in a single host protist cell.</title>
        <authorList>
            <person name="Hongoh Y."/>
            <person name="Sharma V.K."/>
            <person name="Prakash T."/>
            <person name="Noda S."/>
            <person name="Taylor T.D."/>
            <person name="Kudo T."/>
            <person name="Sakaki Y."/>
            <person name="Toyoda A."/>
            <person name="Hattori M."/>
            <person name="Ohkuma M."/>
        </authorList>
    </citation>
    <scope>NUCLEOTIDE SEQUENCE [LARGE SCALE GENOMIC DNA]</scope>
</reference>
<gene>
    <name evidence="1" type="primary">tsaD</name>
    <name type="synonym">gcp</name>
    <name type="ordered locus">TGRD_305</name>
</gene>
<feature type="chain" id="PRO_1000146038" description="tRNA N6-adenosine threonylcarbamoyltransferase">
    <location>
        <begin position="1"/>
        <end position="342"/>
    </location>
</feature>
<feature type="binding site" evidence="1">
    <location>
        <position position="115"/>
    </location>
    <ligand>
        <name>Fe cation</name>
        <dbReference type="ChEBI" id="CHEBI:24875"/>
    </ligand>
</feature>
<feature type="binding site" evidence="1">
    <location>
        <position position="119"/>
    </location>
    <ligand>
        <name>Fe cation</name>
        <dbReference type="ChEBI" id="CHEBI:24875"/>
    </ligand>
</feature>
<feature type="binding site" evidence="1">
    <location>
        <begin position="138"/>
        <end position="142"/>
    </location>
    <ligand>
        <name>substrate</name>
    </ligand>
</feature>
<feature type="binding site" evidence="1">
    <location>
        <position position="171"/>
    </location>
    <ligand>
        <name>substrate</name>
    </ligand>
</feature>
<feature type="binding site" evidence="1">
    <location>
        <position position="184"/>
    </location>
    <ligand>
        <name>substrate</name>
    </ligand>
</feature>
<feature type="binding site" evidence="1">
    <location>
        <position position="188"/>
    </location>
    <ligand>
        <name>substrate</name>
    </ligand>
</feature>
<feature type="binding site" evidence="1">
    <location>
        <position position="276"/>
    </location>
    <ligand>
        <name>substrate</name>
    </ligand>
</feature>
<feature type="binding site" evidence="1">
    <location>
        <position position="304"/>
    </location>
    <ligand>
        <name>Fe cation</name>
        <dbReference type="ChEBI" id="CHEBI:24875"/>
    </ligand>
</feature>